<reference key="1">
    <citation type="journal article" date="2005" name="Science">
        <title>The genome of the basidiomycetous yeast and human pathogen Cryptococcus neoformans.</title>
        <authorList>
            <person name="Loftus B.J."/>
            <person name="Fung E."/>
            <person name="Roncaglia P."/>
            <person name="Rowley D."/>
            <person name="Amedeo P."/>
            <person name="Bruno D."/>
            <person name="Vamathevan J."/>
            <person name="Miranda M."/>
            <person name="Anderson I.J."/>
            <person name="Fraser J.A."/>
            <person name="Allen J.E."/>
            <person name="Bosdet I.E."/>
            <person name="Brent M.R."/>
            <person name="Chiu R."/>
            <person name="Doering T.L."/>
            <person name="Donlin M.J."/>
            <person name="D'Souza C.A."/>
            <person name="Fox D.S."/>
            <person name="Grinberg V."/>
            <person name="Fu J."/>
            <person name="Fukushima M."/>
            <person name="Haas B.J."/>
            <person name="Huang J.C."/>
            <person name="Janbon G."/>
            <person name="Jones S.J.M."/>
            <person name="Koo H.L."/>
            <person name="Krzywinski M.I."/>
            <person name="Kwon-Chung K.J."/>
            <person name="Lengeler K.B."/>
            <person name="Maiti R."/>
            <person name="Marra M.A."/>
            <person name="Marra R.E."/>
            <person name="Mathewson C.A."/>
            <person name="Mitchell T.G."/>
            <person name="Pertea M."/>
            <person name="Riggs F.R."/>
            <person name="Salzberg S.L."/>
            <person name="Schein J.E."/>
            <person name="Shvartsbeyn A."/>
            <person name="Shin H."/>
            <person name="Shumway M."/>
            <person name="Specht C.A."/>
            <person name="Suh B.B."/>
            <person name="Tenney A."/>
            <person name="Utterback T.R."/>
            <person name="Wickes B.L."/>
            <person name="Wortman J.R."/>
            <person name="Wye N.H."/>
            <person name="Kronstad J.W."/>
            <person name="Lodge J.K."/>
            <person name="Heitman J."/>
            <person name="Davis R.W."/>
            <person name="Fraser C.M."/>
            <person name="Hyman R.W."/>
        </authorList>
    </citation>
    <scope>NUCLEOTIDE SEQUENCE [LARGE SCALE GENOMIC DNA]</scope>
    <source>
        <strain>B-3501A</strain>
    </source>
</reference>
<dbReference type="EMBL" id="AAEY01000038">
    <property type="protein sequence ID" value="EAL19691.1"/>
    <property type="molecule type" value="Genomic_DNA"/>
</dbReference>
<dbReference type="RefSeq" id="XP_774338.1">
    <property type="nucleotide sequence ID" value="XM_769245.1"/>
</dbReference>
<dbReference type="SMR" id="P0CS05"/>
<dbReference type="EnsemblFungi" id="AAW44567">
    <property type="protein sequence ID" value="AAW44567"/>
    <property type="gene ID" value="CNG01600"/>
</dbReference>
<dbReference type="GeneID" id="4937355"/>
<dbReference type="KEGG" id="cnb:CNBG3190"/>
<dbReference type="VEuPathDB" id="FungiDB:CNBG3190"/>
<dbReference type="HOGENOM" id="CLU_025360_1_2_1"/>
<dbReference type="OrthoDB" id="6000at5206"/>
<dbReference type="GO" id="GO:0030659">
    <property type="term" value="C:cytoplasmic vesicle membrane"/>
    <property type="evidence" value="ECO:0007669"/>
    <property type="project" value="UniProtKB-SubCell"/>
</dbReference>
<dbReference type="GO" id="GO:0005789">
    <property type="term" value="C:endoplasmic reticulum membrane"/>
    <property type="evidence" value="ECO:0007669"/>
    <property type="project" value="UniProtKB-SubCell"/>
</dbReference>
<dbReference type="GO" id="GO:0000139">
    <property type="term" value="C:Golgi membrane"/>
    <property type="evidence" value="ECO:0007669"/>
    <property type="project" value="UniProtKB-SubCell"/>
</dbReference>
<dbReference type="GO" id="GO:0055085">
    <property type="term" value="P:transmembrane transport"/>
    <property type="evidence" value="ECO:0007669"/>
    <property type="project" value="InterPro"/>
</dbReference>
<dbReference type="InterPro" id="IPR013657">
    <property type="entry name" value="SCL35B1-4/HUT1"/>
</dbReference>
<dbReference type="InterPro" id="IPR050186">
    <property type="entry name" value="TPT_transporter"/>
</dbReference>
<dbReference type="NCBIfam" id="TIGR00803">
    <property type="entry name" value="nst"/>
    <property type="match status" value="1"/>
</dbReference>
<dbReference type="PANTHER" id="PTHR11132">
    <property type="entry name" value="SOLUTE CARRIER FAMILY 35"/>
    <property type="match status" value="1"/>
</dbReference>
<dbReference type="Pfam" id="PF08449">
    <property type="entry name" value="UAA"/>
    <property type="match status" value="1"/>
</dbReference>
<comment type="function">
    <text evidence="1">Involved in the import of GDP-mannose from the cytoplasm into the Golgi lumen.</text>
</comment>
<comment type="subunit">
    <text evidence="1">Homooligomer.</text>
</comment>
<comment type="subcellular location">
    <subcellularLocation>
        <location evidence="1">Golgi apparatus membrane</location>
        <topology evidence="1">Multi-pass membrane protein</topology>
    </subcellularLocation>
    <subcellularLocation>
        <location evidence="1">Cytoplasmic vesicle membrane</location>
        <topology evidence="1">Multi-pass membrane protein</topology>
    </subcellularLocation>
    <subcellularLocation>
        <location evidence="1">Endoplasmic reticulum membrane</location>
        <topology evidence="1">Multi-pass membrane protein</topology>
    </subcellularLocation>
</comment>
<comment type="similarity">
    <text evidence="4">Belongs to the TPT transporter family. SLC35D subfamily.</text>
</comment>
<evidence type="ECO:0000250" key="1"/>
<evidence type="ECO:0000255" key="2"/>
<evidence type="ECO:0000256" key="3">
    <source>
        <dbReference type="SAM" id="MobiDB-lite"/>
    </source>
</evidence>
<evidence type="ECO:0000305" key="4"/>
<sequence>MASYTPSSSRPHTPLGLSPRGSYTNLASAAYDASSPGGHGAKDEKERLRAEREVQEALLKAQDGVEKAKKEEVCMPASTTVLPILSYCVASIMMTVVNKFVVSGRQFTMTFLLLAIQSFVCVACVWLAKRIGVINFRDWDMNDAKAWFPVSSLLVAVIYTGSKSLQFLSIPVYTIFKNLTIILIAYGEVIWFGGHVTPLTLCSFFLMVGSSVIAAWADISTTLSKLSAGVAVVDPISGADVPLSSISVMDTMNVGYLWMFINCLASAGYVLFMRKRIKVTGFKDWDSMFYNNLLSIPVLFVFSLIIEDWGAASFSRNFPEEGRAFLLSAIAFSGAAAVFISYSTAWCVRICGATTYSLVGALNKLPVAASGILFFGDPVNFGNVSAILVGGVSGIVYAVAKTNQAKVEKSKQARGGESKA</sequence>
<protein>
    <recommendedName>
        <fullName>GDP-mannose transporter 2</fullName>
        <shortName>GMT 2</shortName>
    </recommendedName>
</protein>
<name>GMT2_CRYNB</name>
<accession>P0CS05</accession>
<accession>Q55P93</accession>
<accession>Q5KE63</accession>
<accession>Q5VJN4</accession>
<keyword id="KW-0968">Cytoplasmic vesicle</keyword>
<keyword id="KW-0256">Endoplasmic reticulum</keyword>
<keyword id="KW-0333">Golgi apparatus</keyword>
<keyword id="KW-0472">Membrane</keyword>
<keyword id="KW-0762">Sugar transport</keyword>
<keyword id="KW-0812">Transmembrane</keyword>
<keyword id="KW-1133">Transmembrane helix</keyword>
<keyword id="KW-0813">Transport</keyword>
<feature type="chain" id="PRO_0000410314" description="GDP-mannose transporter 2">
    <location>
        <begin position="1"/>
        <end position="420"/>
    </location>
</feature>
<feature type="topological domain" description="Cytoplasmic" evidence="1">
    <location>
        <begin position="1"/>
        <end position="76"/>
    </location>
</feature>
<feature type="transmembrane region" description="Helical" evidence="2">
    <location>
        <begin position="77"/>
        <end position="97"/>
    </location>
</feature>
<feature type="topological domain" description="Lumenal" evidence="1">
    <location>
        <begin position="98"/>
        <end position="106"/>
    </location>
</feature>
<feature type="transmembrane region" description="Helical" evidence="2">
    <location>
        <begin position="107"/>
        <end position="127"/>
    </location>
</feature>
<feature type="topological domain" description="Cytoplasmic" evidence="1">
    <location>
        <begin position="128"/>
        <end position="145"/>
    </location>
</feature>
<feature type="transmembrane region" description="Helical" evidence="2">
    <location>
        <begin position="146"/>
        <end position="168"/>
    </location>
</feature>
<feature type="topological domain" description="Lumenal" evidence="1">
    <location>
        <begin position="169"/>
        <end position="171"/>
    </location>
</feature>
<feature type="transmembrane region" description="Helical" evidence="2">
    <location>
        <begin position="172"/>
        <end position="194"/>
    </location>
</feature>
<feature type="topological domain" description="Cytoplasmic" evidence="1">
    <location>
        <begin position="195"/>
        <end position="200"/>
    </location>
</feature>
<feature type="transmembrane region" description="Helical" evidence="2">
    <location>
        <begin position="201"/>
        <end position="223"/>
    </location>
</feature>
<feature type="topological domain" description="Lumenal" evidence="1">
    <location>
        <begin position="224"/>
        <end position="251"/>
    </location>
</feature>
<feature type="transmembrane region" description="Helical" evidence="2">
    <location>
        <begin position="252"/>
        <end position="272"/>
    </location>
</feature>
<feature type="topological domain" description="Cytoplasmic" evidence="1">
    <location>
        <begin position="273"/>
        <end position="293"/>
    </location>
</feature>
<feature type="transmembrane region" description="Helical" evidence="2">
    <location>
        <begin position="294"/>
        <end position="314"/>
    </location>
</feature>
<feature type="topological domain" description="Lumenal" evidence="1">
    <location>
        <begin position="315"/>
        <end position="323"/>
    </location>
</feature>
<feature type="transmembrane region" description="Helical" evidence="2">
    <location>
        <begin position="324"/>
        <end position="344"/>
    </location>
</feature>
<feature type="topological domain" description="Cytoplasmic" evidence="1">
    <location>
        <begin position="345"/>
        <end position="355"/>
    </location>
</feature>
<feature type="transmembrane region" description="Helical" evidence="2">
    <location>
        <begin position="356"/>
        <end position="376"/>
    </location>
</feature>
<feature type="topological domain" description="Lumenal" evidence="1">
    <location>
        <begin position="377"/>
        <end position="378"/>
    </location>
</feature>
<feature type="transmembrane region" description="Helical" evidence="2">
    <location>
        <begin position="379"/>
        <end position="399"/>
    </location>
</feature>
<feature type="topological domain" description="Cytoplasmic" evidence="1">
    <location>
        <begin position="400"/>
        <end position="420"/>
    </location>
</feature>
<feature type="region of interest" description="Disordered" evidence="3">
    <location>
        <begin position="1"/>
        <end position="21"/>
    </location>
</feature>
<feature type="compositionally biased region" description="Polar residues" evidence="3">
    <location>
        <begin position="1"/>
        <end position="11"/>
    </location>
</feature>
<gene>
    <name type="primary">GMT2</name>
    <name type="synonym">VRG4-2</name>
    <name type="ordered locus">CNBG3190</name>
</gene>
<proteinExistence type="inferred from homology"/>
<organism>
    <name type="scientific">Cryptococcus neoformans var. neoformans serotype D (strain B-3501A)</name>
    <name type="common">Filobasidiella neoformans</name>
    <dbReference type="NCBI Taxonomy" id="283643"/>
    <lineage>
        <taxon>Eukaryota</taxon>
        <taxon>Fungi</taxon>
        <taxon>Dikarya</taxon>
        <taxon>Basidiomycota</taxon>
        <taxon>Agaricomycotina</taxon>
        <taxon>Tremellomycetes</taxon>
        <taxon>Tremellales</taxon>
        <taxon>Cryptococcaceae</taxon>
        <taxon>Cryptococcus</taxon>
        <taxon>Cryptococcus neoformans species complex</taxon>
    </lineage>
</organism>